<organism>
    <name type="scientific">Hylobates lar</name>
    <name type="common">Lar gibbon</name>
    <name type="synonym">White-handed gibbon</name>
    <dbReference type="NCBI Taxonomy" id="9580"/>
    <lineage>
        <taxon>Eukaryota</taxon>
        <taxon>Metazoa</taxon>
        <taxon>Chordata</taxon>
        <taxon>Craniata</taxon>
        <taxon>Vertebrata</taxon>
        <taxon>Euteleostomi</taxon>
        <taxon>Mammalia</taxon>
        <taxon>Eutheria</taxon>
        <taxon>Euarchontoglires</taxon>
        <taxon>Primates</taxon>
        <taxon>Haplorrhini</taxon>
        <taxon>Catarrhini</taxon>
        <taxon>Hylobatidae</taxon>
        <taxon>Hylobates</taxon>
    </lineage>
</organism>
<gene>
    <name type="primary">PMCHL1</name>
</gene>
<comment type="similarity">
    <text evidence="2">Belongs to the melanin-concentrating hormone family.</text>
</comment>
<comment type="caution">
    <text evidence="2">PMCHL1 mRNA may not be used as template for translation. In human only antisense PMCHL1 transcripts are present in brain.</text>
</comment>
<dbReference type="EMBL" id="AF029402">
    <property type="protein sequence ID" value="AAC05255.1"/>
    <property type="molecule type" value="Genomic_DNA"/>
</dbReference>
<dbReference type="GO" id="GO:0045202">
    <property type="term" value="C:synapse"/>
    <property type="evidence" value="ECO:0007669"/>
    <property type="project" value="GOC"/>
</dbReference>
<dbReference type="GO" id="GO:0030354">
    <property type="term" value="F:melanin-concentrating hormone activity"/>
    <property type="evidence" value="ECO:0007669"/>
    <property type="project" value="InterPro"/>
</dbReference>
<dbReference type="GO" id="GO:0031777">
    <property type="term" value="F:type 1 melanin-concentrating hormone receptor binding"/>
    <property type="evidence" value="ECO:0007669"/>
    <property type="project" value="TreeGrafter"/>
</dbReference>
<dbReference type="GO" id="GO:0007268">
    <property type="term" value="P:chemical synaptic transmission"/>
    <property type="evidence" value="ECO:0007669"/>
    <property type="project" value="InterPro"/>
</dbReference>
<dbReference type="InterPro" id="IPR005456">
    <property type="entry name" value="Prepro-melanin_conc_hormone"/>
</dbReference>
<dbReference type="PANTHER" id="PTHR12091">
    <property type="entry name" value="MELANIN-CONCENTRATING HORMONE"/>
    <property type="match status" value="1"/>
</dbReference>
<dbReference type="PANTHER" id="PTHR12091:SF1">
    <property type="entry name" value="PRO-MCH-LIKE PROTEIN 1-RELATED"/>
    <property type="match status" value="1"/>
</dbReference>
<dbReference type="Pfam" id="PF05824">
    <property type="entry name" value="Pro-MCH"/>
    <property type="match status" value="1"/>
</dbReference>
<dbReference type="PRINTS" id="PR01641">
    <property type="entry name" value="PROMCHFAMILY"/>
</dbReference>
<protein>
    <recommendedName>
        <fullName>Pro-MCH variant</fullName>
    </recommendedName>
</protein>
<accession>O62694</accession>
<reference key="1">
    <citation type="journal article" date="1998" name="Mol. Biol. Evol.">
        <title>Emergence of a brain-expressed variant melanin-concentrating hormone gene during higher primate evolution: a gene 'in search of a function'.</title>
        <authorList>
            <person name="Viale A."/>
            <person name="Ortola C."/>
            <person name="Richard F."/>
            <person name="Vernier P."/>
            <person name="Presse F."/>
            <person name="Schilling S."/>
            <person name="Dutrillaux B."/>
            <person name="Nahon J.-L."/>
        </authorList>
    </citation>
    <scope>NUCLEOTIDE SEQUENCE [GENOMIC DNA]</scope>
</reference>
<feature type="chain" id="PRO_0000158269" description="Pro-MCH variant">
    <location>
        <begin position="1" status="less than"/>
        <end position="62" status="greater than"/>
    </location>
</feature>
<feature type="region of interest" description="NGE-like">
    <location>
        <begin position="23"/>
        <end position="41"/>
    </location>
</feature>
<feature type="region of interest" description="Disordered" evidence="1">
    <location>
        <begin position="28"/>
        <end position="62"/>
    </location>
</feature>
<feature type="region of interest" description="NEI-like">
    <location>
        <begin position="44"/>
        <end position="56"/>
    </location>
</feature>
<feature type="region of interest" description="Melanin-concentrating hormone-like">
    <location>
        <begin position="60"/>
        <end position="62" status="greater than"/>
    </location>
</feature>
<feature type="non-terminal residue">
    <location>
        <position position="1"/>
    </location>
</feature>
<feature type="non-terminal residue">
    <location>
        <position position="62"/>
    </location>
</feature>
<proteinExistence type="inferred from homology"/>
<evidence type="ECO:0000256" key="1">
    <source>
        <dbReference type="SAM" id="MobiDB-lite"/>
    </source>
</evidence>
<evidence type="ECO:0000305" key="2"/>
<sequence>KHNFLNHGLSLNLVIKPYLALEGSVAFPAENGVQDTESTQEKRETGDEENSAQFPIGRRDFD</sequence>
<name>MCHL1_HYLLA</name>